<accession>P00198</accession>
<accession>K0AXP4</accession>
<reference evidence="8 9" key="1">
    <citation type="journal article" date="2012" name="PLoS ONE">
        <title>The purine-utilizing bacterium Clostridium acidurici 9a: a genome-guided metabolic reconsideration.</title>
        <authorList>
            <person name="Hartwich K."/>
            <person name="Poehlein A."/>
            <person name="Daniel R."/>
        </authorList>
    </citation>
    <scope>NUCLEOTIDE SEQUENCE [LARGE SCALE GENOMIC DNA]</scope>
    <source>
        <strain evidence="7">ATCC 7906 / DSM 604 / BCRC 14475 / CIP 104303 / KCTC 5404 / NCIMB 10678 / 9a</strain>
    </source>
</reference>
<reference key="2">
    <citation type="journal article" date="1969" name="Biochemistry">
        <title>The amino acid sequence of ferredoxin from Clostridium acidi-urici.</title>
        <authorList>
            <person name="Rall S.C."/>
            <person name="Bolinger R.E."/>
            <person name="Cole R.D."/>
        </authorList>
    </citation>
    <scope>PROTEIN SEQUENCE OF 2-56</scope>
</reference>
<reference key="3">
    <citation type="journal article" date="1993" name="Biochem. J.">
        <title>Sequences of clostridial ferredoxins: determination of the Clostridium sticklandii sequence and correction of the Clostridium acidurici sequence.</title>
        <authorList>
            <person name="Meyer J."/>
            <person name="Moulis J.-M."/>
            <person name="Scherrer N."/>
            <person name="Gagnon J."/>
            <person name="Ulrich J."/>
        </authorList>
    </citation>
    <scope>SEQUENCE REVISION TO 16; 22; 26 AND 29</scope>
    <source>
        <strain evidence="7">ATCC 7906 / DSM 604 / BCRC 14475 / CIP 104303 / KCTC 5404 / NCIMB 10678 / 9a</strain>
    </source>
</reference>
<reference evidence="10" key="4">
    <citation type="journal article" date="1994" name="J. Mol. Biol.">
        <title>Refined crystal structure of the 2[4Fe-4S] ferredoxin from Clostridium acidurici at 1.84-A resolution.</title>
        <authorList>
            <person name="Duee E.D."/>
            <person name="Fanchon E."/>
            <person name="Vicat J."/>
            <person name="Sieker L.C."/>
            <person name="Meyer J."/>
            <person name="Moulis J.-M."/>
        </authorList>
    </citation>
    <scope>X-RAY CRYSTALLOGRAPHY (1.84 ANGSTROMS) OF 2-56 IN COMPLEX WITH IRON-SULFUR (4FE-4S)</scope>
</reference>
<reference evidence="11" key="5">
    <citation type="journal article" date="1997" name="Biochemistry">
        <title>Atomic resolution (0.94 A) structure of Clostridium acidurici ferredoxin. Detailed geometry of [4Fe-4S] clusters in a protein.</title>
        <authorList>
            <person name="Dauter Z."/>
            <person name="Wilson K.S."/>
            <person name="Sieker L.C."/>
            <person name="Meyer J."/>
            <person name="Moulis J.-M."/>
        </authorList>
    </citation>
    <scope>X-RAY CRYSTALLOGRAPHY (0.94 ANGSTROMS) OF 2-56 IN COMPLEX WITH IRON-SULFUR (4FE-4S)</scope>
</reference>
<evidence type="ECO:0000250" key="1">
    <source>
        <dbReference type="UniProtKB" id="P50727"/>
    </source>
</evidence>
<evidence type="ECO:0000255" key="2">
    <source>
        <dbReference type="PROSITE-ProRule" id="PRU00711"/>
    </source>
</evidence>
<evidence type="ECO:0000269" key="3">
    <source>
    </source>
</evidence>
<evidence type="ECO:0000269" key="4">
    <source>
    </source>
</evidence>
<evidence type="ECO:0000269" key="5">
    <source>
    </source>
</evidence>
<evidence type="ECO:0000303" key="6">
    <source>
    </source>
</evidence>
<evidence type="ECO:0000305" key="7"/>
<evidence type="ECO:0000312" key="8">
    <source>
        <dbReference type="EMBL" id="AFS77196.1"/>
    </source>
</evidence>
<evidence type="ECO:0000312" key="9">
    <source>
        <dbReference type="Proteomes" id="UP000006094"/>
    </source>
</evidence>
<evidence type="ECO:0007744" key="10">
    <source>
        <dbReference type="PDB" id="1FDN"/>
    </source>
</evidence>
<evidence type="ECO:0007744" key="11">
    <source>
        <dbReference type="PDB" id="2FDN"/>
    </source>
</evidence>
<evidence type="ECO:0007829" key="12">
    <source>
        <dbReference type="PDB" id="1FDN"/>
    </source>
</evidence>
<evidence type="ECO:0007829" key="13">
    <source>
        <dbReference type="PDB" id="2FDN"/>
    </source>
</evidence>
<keyword id="KW-0002">3D-structure</keyword>
<keyword id="KW-0004">4Fe-4S</keyword>
<keyword id="KW-0903">Direct protein sequencing</keyword>
<keyword id="KW-0249">Electron transport</keyword>
<keyword id="KW-0408">Iron</keyword>
<keyword id="KW-0411">Iron-sulfur</keyword>
<keyword id="KW-0479">Metal-binding</keyword>
<keyword id="KW-1185">Reference proteome</keyword>
<keyword id="KW-0677">Repeat</keyword>
<keyword id="KW-0813">Transport</keyword>
<proteinExistence type="evidence at protein level"/>
<dbReference type="EMBL" id="CP003326">
    <property type="protein sequence ID" value="AFS77196.1"/>
    <property type="molecule type" value="Genomic_DNA"/>
</dbReference>
<dbReference type="PIR" id="S36790">
    <property type="entry name" value="FECLCU"/>
</dbReference>
<dbReference type="RefSeq" id="WP_014966333.1">
    <property type="nucleotide sequence ID" value="NC_018664.1"/>
</dbReference>
<dbReference type="PDB" id="1FCA">
    <property type="method" value="X-ray"/>
    <property type="resolution" value="1.80 A"/>
    <property type="chains" value="A=2-56"/>
</dbReference>
<dbReference type="PDB" id="1FDN">
    <property type="method" value="X-ray"/>
    <property type="resolution" value="1.84 A"/>
    <property type="chains" value="A=2-56"/>
</dbReference>
<dbReference type="PDB" id="2FDN">
    <property type="method" value="X-ray"/>
    <property type="resolution" value="0.94 A"/>
    <property type="chains" value="A=2-56"/>
</dbReference>
<dbReference type="PDBsum" id="1FCA"/>
<dbReference type="PDBsum" id="1FDN"/>
<dbReference type="PDBsum" id="2FDN"/>
<dbReference type="PCDDB" id="P00198"/>
<dbReference type="SMR" id="P00198"/>
<dbReference type="STRING" id="1128398.Curi_c01160"/>
<dbReference type="KEGG" id="cad:Curi_c01160"/>
<dbReference type="PATRIC" id="fig|1128398.3.peg.115"/>
<dbReference type="eggNOG" id="COG2768">
    <property type="taxonomic scope" value="Bacteria"/>
</dbReference>
<dbReference type="HOGENOM" id="CLU_139698_11_4_9"/>
<dbReference type="OrthoDB" id="9803397at2"/>
<dbReference type="EvolutionaryTrace" id="P00198"/>
<dbReference type="Proteomes" id="UP000006094">
    <property type="component" value="Chromosome"/>
</dbReference>
<dbReference type="GO" id="GO:0005737">
    <property type="term" value="C:cytoplasm"/>
    <property type="evidence" value="ECO:0007669"/>
    <property type="project" value="TreeGrafter"/>
</dbReference>
<dbReference type="GO" id="GO:0051539">
    <property type="term" value="F:4 iron, 4 sulfur cluster binding"/>
    <property type="evidence" value="ECO:0000314"/>
    <property type="project" value="UniProtKB"/>
</dbReference>
<dbReference type="GO" id="GO:0009055">
    <property type="term" value="F:electron transfer activity"/>
    <property type="evidence" value="ECO:0000250"/>
    <property type="project" value="UniProtKB"/>
</dbReference>
<dbReference type="GO" id="GO:0046872">
    <property type="term" value="F:metal ion binding"/>
    <property type="evidence" value="ECO:0007669"/>
    <property type="project" value="UniProtKB-KW"/>
</dbReference>
<dbReference type="FunFam" id="3.30.70.20:FF:000045">
    <property type="entry name" value="Ferredoxin, 4Fe-4S"/>
    <property type="match status" value="1"/>
</dbReference>
<dbReference type="Gene3D" id="3.30.70.20">
    <property type="match status" value="1"/>
</dbReference>
<dbReference type="InterPro" id="IPR017896">
    <property type="entry name" value="4Fe4S_Fe-S-bd"/>
</dbReference>
<dbReference type="InterPro" id="IPR017900">
    <property type="entry name" value="4Fe4S_Fe_S_CS"/>
</dbReference>
<dbReference type="InterPro" id="IPR000813">
    <property type="entry name" value="7Fe_ferredoxin"/>
</dbReference>
<dbReference type="InterPro" id="IPR050157">
    <property type="entry name" value="PSI_iron-sulfur_center"/>
</dbReference>
<dbReference type="PANTHER" id="PTHR24960:SF79">
    <property type="entry name" value="PHOTOSYSTEM I IRON-SULFUR CENTER"/>
    <property type="match status" value="1"/>
</dbReference>
<dbReference type="PANTHER" id="PTHR24960">
    <property type="entry name" value="PHOTOSYSTEM I IRON-SULFUR CENTER-RELATED"/>
    <property type="match status" value="1"/>
</dbReference>
<dbReference type="Pfam" id="PF12838">
    <property type="entry name" value="Fer4_7"/>
    <property type="match status" value="1"/>
</dbReference>
<dbReference type="PRINTS" id="PR00354">
    <property type="entry name" value="7FE8SFRDOXIN"/>
</dbReference>
<dbReference type="SUPFAM" id="SSF54862">
    <property type="entry name" value="4Fe-4S ferredoxins"/>
    <property type="match status" value="1"/>
</dbReference>
<dbReference type="PROSITE" id="PS00198">
    <property type="entry name" value="4FE4S_FER_1"/>
    <property type="match status" value="2"/>
</dbReference>
<dbReference type="PROSITE" id="PS51379">
    <property type="entry name" value="4FE4S_FER_2"/>
    <property type="match status" value="2"/>
</dbReference>
<sequence>MAYVINEACISCGACEPECPVNAISSGDDRYVIDADTCIDCGACAGVCPVDAPVQA</sequence>
<name>FER_GOTA9</name>
<comment type="function">
    <text evidence="1">Ferredoxins are iron-sulfur proteins that transfer electrons in a wide variety of metabolic reactions.</text>
</comment>
<comment type="cofactor">
    <cofactor evidence="2">
        <name>[4Fe-4S] cluster</name>
        <dbReference type="ChEBI" id="CHEBI:49883"/>
    </cofactor>
    <text evidence="4 5">Binds 2 [4Fe-4S] clusters.</text>
</comment>
<gene>
    <name evidence="8" type="primary">fdxA</name>
    <name evidence="8" type="ordered locus">Curi_c01160</name>
</gene>
<protein>
    <recommendedName>
        <fullName evidence="8">4Fe-4S ferredoxin FdxA</fullName>
    </recommendedName>
    <alternativeName>
        <fullName evidence="6">Ferredoxin</fullName>
    </alternativeName>
</protein>
<feature type="initiator methionine" description="Removed" evidence="3">
    <location>
        <position position="1"/>
    </location>
</feature>
<feature type="chain" id="PRO_0000159109" description="4Fe-4S ferredoxin FdxA" evidence="3">
    <location>
        <begin position="2"/>
        <end position="56"/>
    </location>
</feature>
<feature type="domain" description="4Fe-4S ferredoxin-type 1" evidence="2">
    <location>
        <begin position="1"/>
        <end position="28"/>
    </location>
</feature>
<feature type="domain" description="4Fe-4S ferredoxin-type 2" evidence="2">
    <location>
        <begin position="29"/>
        <end position="56"/>
    </location>
</feature>
<feature type="binding site" evidence="2 4 5 10 11">
    <location>
        <position position="9"/>
    </location>
    <ligand>
        <name>[4Fe-4S] cluster</name>
        <dbReference type="ChEBI" id="CHEBI:49883"/>
        <label>1</label>
    </ligand>
</feature>
<feature type="binding site" evidence="2 4 5 10 11">
    <location>
        <position position="12"/>
    </location>
    <ligand>
        <name>[4Fe-4S] cluster</name>
        <dbReference type="ChEBI" id="CHEBI:49883"/>
        <label>1</label>
    </ligand>
</feature>
<feature type="binding site" evidence="2 4 5 10 11">
    <location>
        <position position="15"/>
    </location>
    <ligand>
        <name>[4Fe-4S] cluster</name>
        <dbReference type="ChEBI" id="CHEBI:49883"/>
        <label>1</label>
    </ligand>
</feature>
<feature type="binding site" evidence="2 4 5 10 11">
    <location>
        <position position="19"/>
    </location>
    <ligand>
        <name>[4Fe-4S] cluster</name>
        <dbReference type="ChEBI" id="CHEBI:49883"/>
        <label>2</label>
    </ligand>
</feature>
<feature type="binding site" evidence="2 4 5 10 11">
    <location>
        <position position="38"/>
    </location>
    <ligand>
        <name>[4Fe-4S] cluster</name>
        <dbReference type="ChEBI" id="CHEBI:49883"/>
        <label>2</label>
    </ligand>
</feature>
<feature type="binding site" evidence="2 4 5 10 11">
    <location>
        <position position="41"/>
    </location>
    <ligand>
        <name>[4Fe-4S] cluster</name>
        <dbReference type="ChEBI" id="CHEBI:49883"/>
        <label>2</label>
    </ligand>
</feature>
<feature type="binding site" evidence="2 4 5 10 11">
    <location>
        <position position="44"/>
    </location>
    <ligand>
        <name>[4Fe-4S] cluster</name>
        <dbReference type="ChEBI" id="CHEBI:49883"/>
        <label>2</label>
    </ligand>
</feature>
<feature type="binding site" evidence="2 4 5 10 11">
    <location>
        <position position="48"/>
    </location>
    <ligand>
        <name>[4Fe-4S] cluster</name>
        <dbReference type="ChEBI" id="CHEBI:49883"/>
        <label>1</label>
    </ligand>
</feature>
<feature type="strand" evidence="13">
    <location>
        <begin position="3"/>
        <end position="5"/>
    </location>
</feature>
<feature type="helix" evidence="13">
    <location>
        <begin position="16"/>
        <end position="18"/>
    </location>
</feature>
<feature type="strand" evidence="12">
    <location>
        <begin position="24"/>
        <end position="26"/>
    </location>
</feature>
<feature type="strand" evidence="13">
    <location>
        <begin position="28"/>
        <end position="30"/>
    </location>
</feature>
<feature type="turn" evidence="13">
    <location>
        <begin position="35"/>
        <end position="37"/>
    </location>
</feature>
<feature type="helix" evidence="13">
    <location>
        <begin position="43"/>
        <end position="46"/>
    </location>
</feature>
<feature type="strand" evidence="13">
    <location>
        <begin position="53"/>
        <end position="55"/>
    </location>
</feature>
<organism>
    <name type="scientific">Gottschalkia acidurici (strain ATCC 7906 / DSM 604 / BCRC 14475 / CIP 104303 / KCTC 5404 / NCIMB 10678 / 9a)</name>
    <name type="common">Clostridium acidurici</name>
    <dbReference type="NCBI Taxonomy" id="1128398"/>
    <lineage>
        <taxon>Bacteria</taxon>
        <taxon>Bacillati</taxon>
        <taxon>Bacillota</taxon>
        <taxon>Tissierellia</taxon>
        <taxon>Tissierellales</taxon>
        <taxon>Gottschalkiaceae</taxon>
        <taxon>Gottschalkia</taxon>
    </lineage>
</organism>